<name>PRU01_PRUDU</name>
<proteinExistence type="evidence at protein level"/>
<sequence length="551" mass="63052">MAKAFVFSLCLLLVFNGCLAARQSQLSPQNQCQLNQLQAREPDNRIQAEAGQIETWNFNQEDFQCAGVAASRITIQRNGLHLPSYSNAPQLIYIVQGRGVLGAVFSGCPETFEESQQSSQQGRQQEQEQERQQQQQGEQGRQQGQQEQQQERQGRQQGRQQQEEGRQQEQQQGQQGRPQQQQQFRQFDRHQKTRRIREGDVVAIPAGVAYWSYNDGDQELVAVNLFHVSSDHNQLDQNPRKFYLAGNPENEFNQQGQSQPRQQGEQGRPGQHQQPFGRPRQQEQQGSGNNVFSGFNTQLLAQALNVNEETARNLQGQNDNRNQIIRVRGNLDFVQPPRGRQEREHEERQQEQLQQERQQQGGQLMANGLEETFCSLRLKENIGNPERADIFSPRAGRISTLNSHNLPILRFLRLSAERGFFYRNGIYSPHWNVNAHSVVYVIRGNARVQVVNENGDAILDQEVQQGQLFIVPQNHGVIQQAGNQGFEYFAFKTEENAFINTLAGRTSFLRALPDEVLANAYQISREQARQLKYNRQETIALSSSQQRRAVV</sequence>
<dbReference type="EMBL" id="GU059260">
    <property type="protein sequence ID" value="ADN39440.1"/>
    <property type="molecule type" value="mRNA"/>
</dbReference>
<dbReference type="SMR" id="E3SH28"/>
<dbReference type="Allergome" id="1078">
    <property type="allergen name" value="Pru du 6"/>
</dbReference>
<dbReference type="Allergome" id="8426">
    <property type="allergen name" value="Pru du 6.0101"/>
</dbReference>
<dbReference type="ABCD" id="E3SH28">
    <property type="antibodies" value="2 sequenced antibodies"/>
</dbReference>
<dbReference type="GO" id="GO:0043245">
    <property type="term" value="C:extraorganismal space"/>
    <property type="evidence" value="ECO:0000314"/>
    <property type="project" value="UniProtKB"/>
</dbReference>
<dbReference type="GO" id="GO:0045735">
    <property type="term" value="F:nutrient reservoir activity"/>
    <property type="evidence" value="ECO:0000305"/>
    <property type="project" value="UniProtKB"/>
</dbReference>
<dbReference type="GO" id="GO:0034214">
    <property type="term" value="P:protein hexamerization"/>
    <property type="evidence" value="ECO:0000314"/>
    <property type="project" value="UniProtKB"/>
</dbReference>
<dbReference type="GO" id="GO:0048316">
    <property type="term" value="P:seed development"/>
    <property type="evidence" value="ECO:0000270"/>
    <property type="project" value="UniProtKB"/>
</dbReference>
<dbReference type="CDD" id="cd02243">
    <property type="entry name" value="cupin_11S_legumin_C"/>
    <property type="match status" value="1"/>
</dbReference>
<dbReference type="CDD" id="cd02242">
    <property type="entry name" value="cupin_11S_legumin_N"/>
    <property type="match status" value="1"/>
</dbReference>
<dbReference type="FunFam" id="2.60.120.10:FF:000073">
    <property type="entry name" value="Glycinin G1"/>
    <property type="match status" value="1"/>
</dbReference>
<dbReference type="Gene3D" id="2.60.120.10">
    <property type="entry name" value="Jelly Rolls"/>
    <property type="match status" value="3"/>
</dbReference>
<dbReference type="InterPro" id="IPR022379">
    <property type="entry name" value="11S_seedstore_CS"/>
</dbReference>
<dbReference type="InterPro" id="IPR006044">
    <property type="entry name" value="11S_seedstore_pln"/>
</dbReference>
<dbReference type="InterPro" id="IPR006045">
    <property type="entry name" value="Cupin_1"/>
</dbReference>
<dbReference type="InterPro" id="IPR014710">
    <property type="entry name" value="RmlC-like_jellyroll"/>
</dbReference>
<dbReference type="InterPro" id="IPR011051">
    <property type="entry name" value="RmlC_Cupin_sf"/>
</dbReference>
<dbReference type="InterPro" id="IPR050253">
    <property type="entry name" value="Seed_Storage-Functional"/>
</dbReference>
<dbReference type="PANTHER" id="PTHR31189:SF35">
    <property type="entry name" value="12S SEED STORAGE PROTEIN CRB"/>
    <property type="match status" value="1"/>
</dbReference>
<dbReference type="PANTHER" id="PTHR31189">
    <property type="entry name" value="OS03G0336100 PROTEIN-RELATED"/>
    <property type="match status" value="1"/>
</dbReference>
<dbReference type="Pfam" id="PF00190">
    <property type="entry name" value="Cupin_1"/>
    <property type="match status" value="2"/>
</dbReference>
<dbReference type="PRINTS" id="PR00439">
    <property type="entry name" value="11SGLOBULIN"/>
</dbReference>
<dbReference type="SMART" id="SM00835">
    <property type="entry name" value="Cupin_1"/>
    <property type="match status" value="2"/>
</dbReference>
<dbReference type="SUPFAM" id="SSF51182">
    <property type="entry name" value="RmlC-like cupins"/>
    <property type="match status" value="1"/>
</dbReference>
<dbReference type="PROSITE" id="PS00305">
    <property type="entry name" value="11S_SEED_STORAGE"/>
    <property type="match status" value="1"/>
</dbReference>
<organism evidence="12">
    <name type="scientific">Prunus dulcis</name>
    <name type="common">Almond</name>
    <name type="synonym">Amygdalus dulcis</name>
    <dbReference type="NCBI Taxonomy" id="3755"/>
    <lineage>
        <taxon>Eukaryota</taxon>
        <taxon>Viridiplantae</taxon>
        <taxon>Streptophyta</taxon>
        <taxon>Embryophyta</taxon>
        <taxon>Tracheophyta</taxon>
        <taxon>Spermatophyta</taxon>
        <taxon>Magnoliopsida</taxon>
        <taxon>eudicotyledons</taxon>
        <taxon>Gunneridae</taxon>
        <taxon>Pentapetalae</taxon>
        <taxon>rosids</taxon>
        <taxon>fabids</taxon>
        <taxon>Rosales</taxon>
        <taxon>Rosaceae</taxon>
        <taxon>Amygdaloideae</taxon>
        <taxon>Amygdaleae</taxon>
        <taxon>Prunus</taxon>
    </lineage>
</organism>
<comment type="function">
    <text evidence="3 10 11">Seed storage protein.</text>
</comment>
<comment type="subunit">
    <text evidence="11">Hexamer of two trimers; each subunit is composed of an acidic and a basic chain derived from a single precursor and linked by a disulfide bond.</text>
</comment>
<comment type="tissue specificity">
    <text evidence="5 6">Expressed in seed (at protein level) (PubMed:21720172, PubMed:23498967).</text>
</comment>
<comment type="developmental stage">
    <text evidence="5">Expressed during seed development.</text>
</comment>
<comment type="PTM">
    <text evidence="10 11">Proteolytically processed from a single precursor to produce an acidic and a basic chain that are linked by a disulfide bond.</text>
</comment>
<comment type="allergen">
    <text evidence="5 6">Causes an allergic reaction in human. Binds to IgE of patients allergic to almonds (PubMed:21720172, PubMed:23498967). Binds to IgE in 50% of the 18 patients tested. Treatment with denaturing agents, such as 6 M urea, reducing buffer or 10% SDS, have little effect on IgE-binding intensity in a subset of these patients (PubMed:21720172). The mouse IgG monoclonal antibody (mAb) 4C10 reacts with non-reduced, but not the reduced form of this protein, and competes with patient IgE-binding. The conformational binding site of the antibody on this protein is in close proximity with a subset (118-132, 145-159 and 281-295) of patient sequential IgE-binding epitopes suggesting that these regions may be highly immunogenic (PubMed:23498967).</text>
</comment>
<comment type="similarity">
    <text evidence="3 9">Belongs to the 11S seed storage protein (globulins) family.</text>
</comment>
<evidence type="ECO:0000250" key="1">
    <source>
        <dbReference type="UniProtKB" id="Q43607"/>
    </source>
</evidence>
<evidence type="ECO:0000255" key="2"/>
<evidence type="ECO:0000255" key="3">
    <source>
        <dbReference type="RuleBase" id="RU003681"/>
    </source>
</evidence>
<evidence type="ECO:0000256" key="4">
    <source>
        <dbReference type="SAM" id="MobiDB-lite"/>
    </source>
</evidence>
<evidence type="ECO:0000269" key="5">
    <source>
    </source>
</evidence>
<evidence type="ECO:0000269" key="6">
    <source>
    </source>
</evidence>
<evidence type="ECO:0000303" key="7">
    <source>
    </source>
</evidence>
<evidence type="ECO:0000303" key="8">
    <source>
    </source>
</evidence>
<evidence type="ECO:0000305" key="9"/>
<evidence type="ECO:0000305" key="10">
    <source>
    </source>
</evidence>
<evidence type="ECO:0000305" key="11">
    <source>
    </source>
</evidence>
<evidence type="ECO:0000312" key="12">
    <source>
        <dbReference type="EMBL" id="ADN39440.1"/>
    </source>
</evidence>
<protein>
    <recommendedName>
        <fullName evidence="7">Prunin 1 Pru du 6.0101</fullName>
        <shortName evidence="7">Pru1 Pru du 6.0101</shortName>
    </recommendedName>
    <alternativeName>
        <fullName evidence="7 8">11S globulin</fullName>
    </alternativeName>
    <alternativeName>
        <fullName evidence="7">11S seed storage protein</fullName>
    </alternativeName>
    <alternativeName>
        <fullName evidence="7 8">Allergen Pru du 6.01</fullName>
    </alternativeName>
    <alternativeName>
        <fullName evidence="7">Amandin Pru du 6.0101</fullName>
    </alternativeName>
    <allergenName evidence="7">Pru du 6.0101</allergenName>
    <component>
        <recommendedName>
            <fullName evidence="9">Prunin 1 Pru du 6.0101 acidic chain</fullName>
        </recommendedName>
    </component>
    <component>
        <recommendedName>
            <fullName evidence="9">Prunin 1 Pru du 6.0101 basic chain</fullName>
        </recommendedName>
    </component>
</protein>
<accession>E3SH28</accession>
<feature type="signal peptide" evidence="3">
    <location>
        <begin position="1"/>
        <end position="20"/>
    </location>
</feature>
<feature type="chain" id="PRO_5007749900" description="Prunin 1 Pru du 6.0101 acidic chain">
    <location>
        <begin position="21"/>
        <end position="367"/>
    </location>
</feature>
<feature type="chain" id="PRO_0000448061" description="Prunin 1 Pru du 6.0101 basic chain" evidence="1">
    <location>
        <begin position="368"/>
        <end position="551"/>
    </location>
</feature>
<feature type="domain" description="Cupin type-1 1" evidence="2">
    <location>
        <begin position="37"/>
        <end position="312"/>
    </location>
</feature>
<feature type="domain" description="Cupin type-1 2" evidence="2">
    <location>
        <begin position="380"/>
        <end position="529"/>
    </location>
</feature>
<feature type="region of interest" description="Disordered" evidence="4">
    <location>
        <begin position="111"/>
        <end position="194"/>
    </location>
</feature>
<feature type="region of interest" description="IgE-binding" evidence="5">
    <location>
        <begin position="118"/>
        <end position="132"/>
    </location>
</feature>
<feature type="region of interest" description="IgE-binding" evidence="5">
    <location>
        <begin position="145"/>
        <end position="159"/>
    </location>
</feature>
<feature type="region of interest" description="IgE-binding" evidence="5">
    <location>
        <begin position="161"/>
        <end position="175"/>
    </location>
</feature>
<feature type="region of interest" description="IgE-binding" evidence="5">
    <location>
        <begin position="225"/>
        <end position="239"/>
    </location>
</feature>
<feature type="region of interest" description="Disordered" evidence="4">
    <location>
        <begin position="238"/>
        <end position="293"/>
    </location>
</feature>
<feature type="region of interest" description="IgE-binding" evidence="5">
    <location>
        <begin position="281"/>
        <end position="295"/>
    </location>
</feature>
<feature type="region of interest" description="Disordered" evidence="4">
    <location>
        <begin position="311"/>
        <end position="361"/>
    </location>
</feature>
<feature type="region of interest" description="IgE-binding" evidence="5">
    <location>
        <begin position="510"/>
        <end position="524"/>
    </location>
</feature>
<feature type="short sequence motif" description="NGXEET; peptidase recognition motif" evidence="9">
    <location>
        <begin position="367"/>
        <end position="372"/>
    </location>
</feature>
<feature type="compositionally biased region" description="Low complexity" evidence="4">
    <location>
        <begin position="114"/>
        <end position="124"/>
    </location>
</feature>
<feature type="compositionally biased region" description="Low complexity" evidence="4">
    <location>
        <begin position="132"/>
        <end position="148"/>
    </location>
</feature>
<feature type="compositionally biased region" description="Low complexity" evidence="4">
    <location>
        <begin position="168"/>
        <end position="185"/>
    </location>
</feature>
<feature type="compositionally biased region" description="Low complexity" evidence="4">
    <location>
        <begin position="254"/>
        <end position="275"/>
    </location>
</feature>
<feature type="compositionally biased region" description="Polar residues" evidence="4">
    <location>
        <begin position="282"/>
        <end position="293"/>
    </location>
</feature>
<feature type="compositionally biased region" description="Polar residues" evidence="4">
    <location>
        <begin position="311"/>
        <end position="323"/>
    </location>
</feature>
<feature type="compositionally biased region" description="Basic and acidic residues" evidence="4">
    <location>
        <begin position="339"/>
        <end position="350"/>
    </location>
</feature>
<feature type="compositionally biased region" description="Low complexity" evidence="4">
    <location>
        <begin position="351"/>
        <end position="361"/>
    </location>
</feature>
<feature type="disulfide bond" evidence="1">
    <location>
        <begin position="32"/>
        <end position="65"/>
    </location>
</feature>
<feature type="disulfide bond" description="Interchain (between acidic and basic chains)" evidence="1">
    <location>
        <begin position="108"/>
        <end position="374"/>
    </location>
</feature>
<reference evidence="12" key="1">
    <citation type="journal article" date="2011" name="Int. Arch. Allergy Immunol.">
        <title>Cloning, expression and patient IgE reactivity of recombinant Pru du 6, an 11S globulin from almond.</title>
        <authorList>
            <person name="Willison L.N."/>
            <person name="Tripathi P."/>
            <person name="Sharma G."/>
            <person name="Teuber S.S."/>
            <person name="Sathe S.K."/>
            <person name="Roux K.H."/>
        </authorList>
    </citation>
    <scope>NUCLEOTIDE SEQUENCE [MRNA]</scope>
    <scope>TISSUE SPECIFICITY</scope>
    <scope>DEVELOPMENTAL STAGE</scope>
    <scope>ALLERGEN</scope>
    <scope>REGIONS</scope>
    <source>
        <tissue evidence="7">Immature seed</tissue>
    </source>
</reference>
<reference key="2">
    <citation type="journal article" date="2013" name="Mol. Immunol.">
        <title>Conformational epitope mapping of Pru du 6, a major allergen from almond nut.</title>
        <authorList>
            <person name="Willison L.N."/>
            <person name="Zhang Q."/>
            <person name="Su M."/>
            <person name="Teuber S.S."/>
            <person name="Sathe S.K."/>
            <person name="Roux K.H."/>
        </authorList>
    </citation>
    <scope>TISSUE SPECIFICITY</scope>
    <scope>ALLERGEN</scope>
</reference>
<keyword id="KW-0020">Allergen</keyword>
<keyword id="KW-1015">Disulfide bond</keyword>
<keyword id="KW-0708">Seed storage protein</keyword>
<keyword id="KW-0732">Signal</keyword>
<keyword id="KW-0758">Storage protein</keyword>